<comment type="subcellular location">
    <subcellularLocation>
        <location evidence="5">Secreted</location>
    </subcellularLocation>
</comment>
<sequence length="1572" mass="164723">MPVGVEARASWRVVALTLLLLPAVPAASQPLPPRPLQPSMPHVCAEQKLTLVGHRQPCVQAFSRVVPVWRSGCGQQAWCVGQERRTVYYMSYRQVYATEARTVFRCCPGWSQKPGQEGCLSDVDECANANGGCEGPCCNTVGGFYCRCPPGYQLQGDGKTCQDVDECRSHNGGCQHRCVNTPGSYLCECKPGFRLHTDGRTCLAISSCTLGNGGCQHQCVQLTVTQHRCQCRPQYQLQEDGRRCVRRSPCADGNGGCMHTCQELRGLAHCGCHPGYQLAADRKACEDVDECALGLAQCAHGCLNTQGSFKCVCHAGYELGADGRQCYRIEMEIVNSCEAGNGGCSHGCSHTSTGPLCTCPRGYELDEDQKTCIDIDDCANSPCCQQVCANTPGGYECSCFAGYRLNTDGCGCEDVDECASGHSGCEHHCSNLAGSFQCFCEAGYRLDEDRRGCTPLEESVVDLDGQLPFVRPLPHIAVLGDELPQLFQDDYGAEEEAVAELRGEHTLTEKFVCLDHSFGHDCSLTCDDCRNGGTCFPGLDGCDCPEGWTGIICNETCPPDTFGKNCSSPCICQNGGTCDPVSGACRCPPGVSGAHCEDGCPKGFYGKHCRKKCHCANRGRCHRLYGACLCDPGLYGRFCHLACPPWAFGPGCSEDCLCEQSHTRSCNSKDGSCSCKAGFQGERCEAECEPGSFGPGCRNRCTCRPGVACDPVSGECRTQCPPGYQGEDCGQECPVGTFGVNCSGSCSCVGAPCHRVTGECLCPPGKTGEDCGADCPEGRWGLGCQEICPACEHGASCDPETGTCLCLPGFVGSRCQDACPAGWFGTGCQMRCACANDGHCHPATGRCSCAPGWTGLSCQRACDSGHWGPDCIHPCNCSAGHGNCDAVSGLCLCEAGYEGPQCEQWCRQGYFGPGCEQKCRCEHGATCDHVSGACTCPAGWRGSFCEHACPAGFFGLDCGSACNCSAGAPCDAVTGSCICPAGRWGPHCAQTCPPLTFGLNCSQICTCFNGASCDPVLGQCHCAPGWMGPTCLQACPAGLYGKNCQHSCLCRNGGSCDPILGQCTCPEGWTGLACENECLPGHHGAGCRLNCSCLNGGTCDRLTGHCRCPAGWTGDKCQSPCVSGMFGVHCEEHCACRKGATCHHVTGACLCPPGWRGSHCEQACPRGWFGEACAQRCHCPPGASCHHVSGECHCPPGFTGPGCEQACQPGTFGKDCEHPCQCPGETWACHPASGACVCAAGYHGTDCQQRCPSGRYGPGCEQICKCLNGGTCDPATGACYCPAGFLGADCSLACPQGRFGPSCAHVCTCGQGAACDPVSGTCICPPGKTGGHCERGCPQDRFGKGCEHKCACRNGGLCHATNGSCSCPLGWMGPHCEHACPAGRYGAACLLECSCQNNGSCEPTSGACLCGPGFYGQACEDTCPAGFHGSGCQRVCECQQGAPCDPVSGRCLCPAGFRGQFCERGCKPGFFGDGCLQQCNSPTGVPCDPISGLCLCPPGRAGTTCDLDCRRGRFGPGCALRCDCGGGADCDPISGQCHCVDSYTGPTCREVPTQLSSIRPAPQHSSSKAMKH</sequence>
<protein>
    <recommendedName>
        <fullName>Multiple epidermal growth factor-like domains protein 6</fullName>
        <shortName>Multiple EGF-like domains protein 6</shortName>
    </recommendedName>
    <alternativeName>
        <fullName>Epidermal growth factor-like protein 3</fullName>
        <shortName>EGF-like protein 3</shortName>
    </alternativeName>
</protein>
<evidence type="ECO:0000250" key="1"/>
<evidence type="ECO:0000255" key="2"/>
<evidence type="ECO:0000255" key="3">
    <source>
        <dbReference type="PROSITE-ProRule" id="PRU00076"/>
    </source>
</evidence>
<evidence type="ECO:0000255" key="4">
    <source>
        <dbReference type="PROSITE-ProRule" id="PRU00384"/>
    </source>
</evidence>
<evidence type="ECO:0000305" key="5"/>
<accession>Q80V70</accession>
<accession>A2A913</accession>
<name>MEGF6_MOUSE</name>
<gene>
    <name type="primary">Megf6</name>
    <name type="synonym">Egfl3</name>
</gene>
<proteinExistence type="evidence at transcript level"/>
<feature type="signal peptide" evidence="2">
    <location>
        <begin position="1"/>
        <end position="26"/>
    </location>
</feature>
<feature type="chain" id="PRO_0000055628" description="Multiple epidermal growth factor-like domains protein 6">
    <location>
        <begin position="27"/>
        <end position="1572"/>
    </location>
</feature>
<feature type="domain" description="EMI" evidence="4">
    <location>
        <begin position="40"/>
        <end position="121"/>
    </location>
</feature>
<feature type="domain" description="EGF-like 1; calcium-binding" evidence="3">
    <location>
        <begin position="122"/>
        <end position="162"/>
    </location>
</feature>
<feature type="domain" description="EGF-like 2; calcium-binding" evidence="3">
    <location>
        <begin position="163"/>
        <end position="203"/>
    </location>
</feature>
<feature type="domain" description="EGF-like 3; calcium-binding" evidence="3">
    <location>
        <begin position="287"/>
        <end position="327"/>
    </location>
</feature>
<feature type="domain" description="EGF-like 4; calcium-binding" evidence="3">
    <location>
        <begin position="414"/>
        <end position="454"/>
    </location>
</feature>
<feature type="domain" description="EGF-like 5" evidence="3">
    <location>
        <begin position="518"/>
        <end position="554"/>
    </location>
</feature>
<feature type="domain" description="EGF-like 6" evidence="3">
    <location>
        <begin position="562"/>
        <end position="597"/>
    </location>
</feature>
<feature type="domain" description="EGF-like 7" evidence="3">
    <location>
        <begin position="605"/>
        <end position="640"/>
    </location>
</feature>
<feature type="domain" description="EGF-like 8" evidence="3">
    <location>
        <begin position="785"/>
        <end position="816"/>
    </location>
</feature>
<feature type="domain" description="EGF-like 9" evidence="3">
    <location>
        <begin position="829"/>
        <end position="859"/>
    </location>
</feature>
<feature type="domain" description="EGF-like 10" evidence="3">
    <location>
        <begin position="867"/>
        <end position="903"/>
    </location>
</feature>
<feature type="domain" description="EGF-like 11" evidence="3">
    <location>
        <begin position="911"/>
        <end position="946"/>
    </location>
</feature>
<feature type="domain" description="EGF-like 12" evidence="3">
    <location>
        <begin position="997"/>
        <end position="1032"/>
    </location>
</feature>
<feature type="domain" description="EGF-like 13" evidence="3">
    <location>
        <begin position="1040"/>
        <end position="1075"/>
    </location>
</feature>
<feature type="domain" description="EGF-like 14" evidence="3">
    <location>
        <begin position="1083"/>
        <end position="1118"/>
    </location>
</feature>
<feature type="domain" description="EGF-like 15" evidence="3">
    <location>
        <begin position="1131"/>
        <end position="1161"/>
    </location>
</feature>
<feature type="domain" description="EGF-like 16" evidence="3">
    <location>
        <begin position="1169"/>
        <end position="1204"/>
    </location>
</feature>
<feature type="domain" description="EGF-like 17" evidence="3">
    <location>
        <begin position="1256"/>
        <end position="1291"/>
    </location>
</feature>
<feature type="domain" description="EGF-like 18" evidence="3">
    <location>
        <begin position="1299"/>
        <end position="1334"/>
    </location>
</feature>
<feature type="domain" description="EGF-like 19" evidence="3">
    <location>
        <begin position="1342"/>
        <end position="1377"/>
    </location>
</feature>
<feature type="domain" description="EGF-like 20" evidence="3">
    <location>
        <begin position="1390"/>
        <end position="1420"/>
    </location>
</feature>
<feature type="domain" description="EGF-like 21" evidence="3">
    <location>
        <begin position="1428"/>
        <end position="1463"/>
    </location>
</feature>
<feature type="glycosylation site" description="N-linked (GlcNAc...) asparagine" evidence="2">
    <location>
        <position position="1000"/>
    </location>
</feature>
<feature type="disulfide bond" evidence="2">
    <location>
        <begin position="44"/>
        <end position="107"/>
    </location>
</feature>
<feature type="disulfide bond" evidence="2">
    <location>
        <begin position="73"/>
        <end position="79"/>
    </location>
</feature>
<feature type="disulfide bond" evidence="2">
    <location>
        <begin position="106"/>
        <end position="119"/>
    </location>
</feature>
<feature type="disulfide bond" evidence="1">
    <location>
        <begin position="126"/>
        <end position="137"/>
    </location>
</feature>
<feature type="disulfide bond" evidence="1">
    <location>
        <begin position="133"/>
        <end position="146"/>
    </location>
</feature>
<feature type="disulfide bond" evidence="1">
    <location>
        <begin position="148"/>
        <end position="161"/>
    </location>
</feature>
<feature type="disulfide bond" evidence="1">
    <location>
        <begin position="167"/>
        <end position="178"/>
    </location>
</feature>
<feature type="disulfide bond" evidence="1">
    <location>
        <begin position="174"/>
        <end position="187"/>
    </location>
</feature>
<feature type="disulfide bond" evidence="1">
    <location>
        <begin position="189"/>
        <end position="202"/>
    </location>
</feature>
<feature type="disulfide bond" evidence="1">
    <location>
        <begin position="291"/>
        <end position="302"/>
    </location>
</feature>
<feature type="disulfide bond" evidence="1">
    <location>
        <begin position="298"/>
        <end position="311"/>
    </location>
</feature>
<feature type="disulfide bond" evidence="1">
    <location>
        <begin position="313"/>
        <end position="326"/>
    </location>
</feature>
<feature type="disulfide bond" evidence="1">
    <location>
        <begin position="418"/>
        <end position="429"/>
    </location>
</feature>
<feature type="disulfide bond" evidence="1">
    <location>
        <begin position="425"/>
        <end position="438"/>
    </location>
</feature>
<feature type="disulfide bond" evidence="1">
    <location>
        <begin position="440"/>
        <end position="453"/>
    </location>
</feature>
<feature type="disulfide bond" evidence="1">
    <location>
        <begin position="522"/>
        <end position="535"/>
    </location>
</feature>
<feature type="disulfide bond" evidence="1">
    <location>
        <begin position="529"/>
        <end position="542"/>
    </location>
</feature>
<feature type="disulfide bond" evidence="1">
    <location>
        <begin position="544"/>
        <end position="553"/>
    </location>
</feature>
<feature type="disulfide bond" evidence="1">
    <location>
        <begin position="566"/>
        <end position="578"/>
    </location>
</feature>
<feature type="disulfide bond" evidence="1">
    <location>
        <begin position="572"/>
        <end position="585"/>
    </location>
</feature>
<feature type="disulfide bond" evidence="1">
    <location>
        <begin position="587"/>
        <end position="596"/>
    </location>
</feature>
<feature type="disulfide bond" evidence="1">
    <location>
        <begin position="609"/>
        <end position="621"/>
    </location>
</feature>
<feature type="disulfide bond" evidence="1">
    <location>
        <begin position="615"/>
        <end position="628"/>
    </location>
</feature>
<feature type="disulfide bond" evidence="1">
    <location>
        <begin position="630"/>
        <end position="639"/>
    </location>
</feature>
<feature type="disulfide bond" evidence="1">
    <location>
        <begin position="788"/>
        <end position="797"/>
    </location>
</feature>
<feature type="disulfide bond" evidence="1">
    <location>
        <begin position="791"/>
        <end position="804"/>
    </location>
</feature>
<feature type="disulfide bond" evidence="1">
    <location>
        <begin position="806"/>
        <end position="815"/>
    </location>
</feature>
<feature type="disulfide bond" evidence="1">
    <location>
        <begin position="832"/>
        <end position="840"/>
    </location>
</feature>
<feature type="disulfide bond" evidence="1">
    <location>
        <begin position="834"/>
        <end position="847"/>
    </location>
</feature>
<feature type="disulfide bond" evidence="1">
    <location>
        <begin position="849"/>
        <end position="858"/>
    </location>
</feature>
<feature type="disulfide bond" evidence="1">
    <location>
        <begin position="871"/>
        <end position="884"/>
    </location>
</feature>
<feature type="disulfide bond" evidence="1">
    <location>
        <begin position="875"/>
        <end position="891"/>
    </location>
</feature>
<feature type="disulfide bond" evidence="1">
    <location>
        <begin position="893"/>
        <end position="902"/>
    </location>
</feature>
<feature type="disulfide bond" evidence="1">
    <location>
        <begin position="915"/>
        <end position="927"/>
    </location>
</feature>
<feature type="disulfide bond" evidence="1">
    <location>
        <begin position="921"/>
        <end position="934"/>
    </location>
</feature>
<feature type="disulfide bond" evidence="1">
    <location>
        <begin position="936"/>
        <end position="945"/>
    </location>
</feature>
<feature type="disulfide bond" evidence="1">
    <location>
        <begin position="1001"/>
        <end position="1013"/>
    </location>
</feature>
<feature type="disulfide bond" evidence="1">
    <location>
        <begin position="1007"/>
        <end position="1020"/>
    </location>
</feature>
<feature type="disulfide bond" evidence="1">
    <location>
        <begin position="1022"/>
        <end position="1031"/>
    </location>
</feature>
<feature type="disulfide bond" evidence="1">
    <location>
        <begin position="1044"/>
        <end position="1056"/>
    </location>
</feature>
<feature type="disulfide bond" evidence="1">
    <location>
        <begin position="1050"/>
        <end position="1063"/>
    </location>
</feature>
<feature type="disulfide bond" evidence="1">
    <location>
        <begin position="1065"/>
        <end position="1074"/>
    </location>
</feature>
<feature type="disulfide bond" evidence="1">
    <location>
        <begin position="1087"/>
        <end position="1099"/>
    </location>
</feature>
<feature type="disulfide bond" evidence="1">
    <location>
        <begin position="1093"/>
        <end position="1106"/>
    </location>
</feature>
<feature type="disulfide bond" evidence="1">
    <location>
        <begin position="1108"/>
        <end position="1117"/>
    </location>
</feature>
<feature type="disulfide bond" evidence="1">
    <location>
        <begin position="1134"/>
        <end position="1142"/>
    </location>
</feature>
<feature type="disulfide bond" evidence="1">
    <location>
        <begin position="1136"/>
        <end position="1149"/>
    </location>
</feature>
<feature type="disulfide bond" evidence="1">
    <location>
        <begin position="1151"/>
        <end position="1160"/>
    </location>
</feature>
<feature type="disulfide bond" evidence="1">
    <location>
        <begin position="1173"/>
        <end position="1185"/>
    </location>
</feature>
<feature type="disulfide bond" evidence="1">
    <location>
        <begin position="1177"/>
        <end position="1192"/>
    </location>
</feature>
<feature type="disulfide bond" evidence="1">
    <location>
        <begin position="1194"/>
        <end position="1203"/>
    </location>
</feature>
<feature type="disulfide bond" evidence="1">
    <location>
        <begin position="1260"/>
        <end position="1272"/>
    </location>
</feature>
<feature type="disulfide bond" evidence="1">
    <location>
        <begin position="1266"/>
        <end position="1279"/>
    </location>
</feature>
<feature type="disulfide bond" evidence="1">
    <location>
        <begin position="1281"/>
        <end position="1290"/>
    </location>
</feature>
<feature type="disulfide bond" evidence="1">
    <location>
        <begin position="1303"/>
        <end position="1315"/>
    </location>
</feature>
<feature type="disulfide bond" evidence="1">
    <location>
        <begin position="1309"/>
        <end position="1322"/>
    </location>
</feature>
<feature type="disulfide bond" evidence="1">
    <location>
        <begin position="1324"/>
        <end position="1333"/>
    </location>
</feature>
<feature type="disulfide bond" evidence="1">
    <location>
        <begin position="1346"/>
        <end position="1358"/>
    </location>
</feature>
<feature type="disulfide bond" evidence="1">
    <location>
        <begin position="1352"/>
        <end position="1365"/>
    </location>
</feature>
<feature type="disulfide bond" evidence="1">
    <location>
        <begin position="1367"/>
        <end position="1376"/>
    </location>
</feature>
<feature type="disulfide bond" evidence="1">
    <location>
        <begin position="1393"/>
        <end position="1401"/>
    </location>
</feature>
<feature type="disulfide bond" evidence="1">
    <location>
        <begin position="1395"/>
        <end position="1408"/>
    </location>
</feature>
<feature type="disulfide bond" evidence="1">
    <location>
        <begin position="1410"/>
        <end position="1419"/>
    </location>
</feature>
<feature type="disulfide bond" evidence="1">
    <location>
        <begin position="1432"/>
        <end position="1444"/>
    </location>
</feature>
<feature type="disulfide bond" evidence="1">
    <location>
        <begin position="1438"/>
        <end position="1451"/>
    </location>
</feature>
<feature type="disulfide bond" evidence="1">
    <location>
        <begin position="1453"/>
        <end position="1462"/>
    </location>
</feature>
<feature type="sequence conflict" description="In Ref. 1; CAM21839." evidence="5" ref="1">
    <original>S</original>
    <variation>N</variation>
    <location>
        <position position="1055"/>
    </location>
</feature>
<feature type="sequence conflict" description="In Ref. 1; CAM21839." evidence="5" ref="1">
    <original>A</original>
    <variation>T</variation>
    <location>
        <position position="1110"/>
    </location>
</feature>
<feature type="sequence conflict" description="In Ref. 1; CAM21839." evidence="5" ref="1">
    <original>R</original>
    <variation>H</variation>
    <location>
        <position position="1458"/>
    </location>
</feature>
<feature type="sequence conflict" description="In Ref. 2; AAH58571." evidence="5" ref="2">
    <original>S</original>
    <variation>C</variation>
    <location>
        <position position="1481"/>
    </location>
</feature>
<dbReference type="EMBL" id="AL627123">
    <property type="protein sequence ID" value="CAM21839.1"/>
    <property type="molecule type" value="Genomic_DNA"/>
</dbReference>
<dbReference type="EMBL" id="BC031402">
    <property type="protein sequence ID" value="AAH31402.1"/>
    <property type="molecule type" value="mRNA"/>
</dbReference>
<dbReference type="EMBL" id="BC039980">
    <property type="protein sequence ID" value="AAH39980.1"/>
    <property type="molecule type" value="mRNA"/>
</dbReference>
<dbReference type="EMBL" id="BC058571">
    <property type="protein sequence ID" value="AAH58571.1"/>
    <property type="molecule type" value="mRNA"/>
</dbReference>
<dbReference type="CCDS" id="CCDS51398.1"/>
<dbReference type="SMR" id="Q80V70"/>
<dbReference type="STRING" id="10090.ENSMUSP00000030897"/>
<dbReference type="GlyCosmos" id="Q80V70">
    <property type="glycosylation" value="1 site, No reported glycans"/>
</dbReference>
<dbReference type="GlyGen" id="Q80V70">
    <property type="glycosylation" value="2 sites, 1 N-linked glycan (1 site)"/>
</dbReference>
<dbReference type="iPTMnet" id="Q80V70"/>
<dbReference type="PhosphoSitePlus" id="Q80V70"/>
<dbReference type="SwissPalm" id="Q80V70"/>
<dbReference type="PaxDb" id="10090-ENSMUSP00000030897"/>
<dbReference type="ProteomicsDB" id="293459"/>
<dbReference type="AGR" id="MGI:1919351"/>
<dbReference type="MGI" id="MGI:1919351">
    <property type="gene designation" value="Megf6"/>
</dbReference>
<dbReference type="eggNOG" id="KOG1218">
    <property type="taxonomic scope" value="Eukaryota"/>
</dbReference>
<dbReference type="InParanoid" id="Q80V70"/>
<dbReference type="PhylomeDB" id="Q80V70"/>
<dbReference type="TreeFam" id="TF332598"/>
<dbReference type="Reactome" id="R-MMU-3000157">
    <property type="pathway name" value="Laminin interactions"/>
</dbReference>
<dbReference type="Reactome" id="R-MMU-381426">
    <property type="pathway name" value="Regulation of Insulin-like Growth Factor (IGF) transport and uptake by Insulin-like Growth Factor Binding Proteins (IGFBPs)"/>
</dbReference>
<dbReference type="Reactome" id="R-MMU-446107">
    <property type="pathway name" value="Type I hemidesmosome assembly"/>
</dbReference>
<dbReference type="Reactome" id="R-MMU-8874081">
    <property type="pathway name" value="MET activates PTK2 signaling"/>
</dbReference>
<dbReference type="Reactome" id="R-MMU-8957275">
    <property type="pathway name" value="Post-translational protein phosphorylation"/>
</dbReference>
<dbReference type="Reactome" id="R-MMU-9913351">
    <property type="pathway name" value="Formation of the dystrophin-glycoprotein complex (DGC)"/>
</dbReference>
<dbReference type="ChiTaRS" id="Megf6">
    <property type="organism name" value="mouse"/>
</dbReference>
<dbReference type="PRO" id="PR:Q80V70"/>
<dbReference type="Proteomes" id="UP000000589">
    <property type="component" value="Unplaced"/>
</dbReference>
<dbReference type="RNAct" id="Q80V70">
    <property type="molecule type" value="protein"/>
</dbReference>
<dbReference type="GO" id="GO:0062023">
    <property type="term" value="C:collagen-containing extracellular matrix"/>
    <property type="evidence" value="ECO:0007005"/>
    <property type="project" value="BHF-UCL"/>
</dbReference>
<dbReference type="GO" id="GO:0005576">
    <property type="term" value="C:extracellular region"/>
    <property type="evidence" value="ECO:0007669"/>
    <property type="project" value="UniProtKB-SubCell"/>
</dbReference>
<dbReference type="GO" id="GO:0005509">
    <property type="term" value="F:calcium ion binding"/>
    <property type="evidence" value="ECO:0007669"/>
    <property type="project" value="InterPro"/>
</dbReference>
<dbReference type="GO" id="GO:0005044">
    <property type="term" value="F:scavenger receptor activity"/>
    <property type="evidence" value="ECO:0007669"/>
    <property type="project" value="InterPro"/>
</dbReference>
<dbReference type="FunFam" id="2.10.25.10:FF:000326">
    <property type="entry name" value="Multiple EGF like domains 6"/>
    <property type="match status" value="1"/>
</dbReference>
<dbReference type="FunFam" id="2.170.300.10:FF:000002">
    <property type="entry name" value="Multiple epidermal growth factor-like domains 10"/>
    <property type="match status" value="1"/>
</dbReference>
<dbReference type="FunFam" id="2.10.25.10:FF:000306">
    <property type="entry name" value="Multiple epidermal growth factor-like domains 6"/>
    <property type="match status" value="1"/>
</dbReference>
<dbReference type="FunFam" id="2.10.25.10:FF:000772">
    <property type="entry name" value="Multiple epidermal growth factor-like domains 6"/>
    <property type="match status" value="1"/>
</dbReference>
<dbReference type="FunFam" id="2.170.300.10:FF:000027">
    <property type="entry name" value="Multiple epidermal growth factor-like domains 6"/>
    <property type="match status" value="2"/>
</dbReference>
<dbReference type="FunFam" id="2.10.25.10:FF:000863">
    <property type="entry name" value="Multiple epidermal growth factor-like domains protein 6"/>
    <property type="match status" value="1"/>
</dbReference>
<dbReference type="FunFam" id="2.10.25.10:FF:000926">
    <property type="entry name" value="Multiple epidermal growth factor-like domains protein 6"/>
    <property type="match status" value="1"/>
</dbReference>
<dbReference type="FunFam" id="2.170.300.10:FF:000030">
    <property type="entry name" value="Multiple epidermal growth factor-like domains protein 6"/>
    <property type="match status" value="1"/>
</dbReference>
<dbReference type="FunFam" id="2.170.300.10:FF:000038">
    <property type="entry name" value="Multiple epidermal growth factor-like domains protein 6"/>
    <property type="match status" value="1"/>
</dbReference>
<dbReference type="FunFam" id="2.170.300.10:FF:000044">
    <property type="entry name" value="Multiple epidermal growth factor-like domains protein 6"/>
    <property type="match status" value="1"/>
</dbReference>
<dbReference type="FunFam" id="2.10.25.10:FF:000028">
    <property type="entry name" value="Signal peptide, CUB domain and EGF-like domain-containing 2"/>
    <property type="match status" value="1"/>
</dbReference>
<dbReference type="FunFam" id="2.10.25.10:FF:000037">
    <property type="entry name" value="Signal peptide, CUB domain and EGF-like domain-containing 2"/>
    <property type="match status" value="2"/>
</dbReference>
<dbReference type="FunFam" id="2.170.300.10:FF:000041">
    <property type="entry name" value="Tyrosine protein kinase receptor tie-1, putative"/>
    <property type="match status" value="2"/>
</dbReference>
<dbReference type="Gene3D" id="2.10.25.10">
    <property type="entry name" value="Laminin"/>
    <property type="match status" value="10"/>
</dbReference>
<dbReference type="Gene3D" id="2.170.300.10">
    <property type="entry name" value="Tie2 ligand-binding domain superfamily"/>
    <property type="match status" value="7"/>
</dbReference>
<dbReference type="InterPro" id="IPR026823">
    <property type="entry name" value="cEGF"/>
</dbReference>
<dbReference type="InterPro" id="IPR001881">
    <property type="entry name" value="EGF-like_Ca-bd_dom"/>
</dbReference>
<dbReference type="InterPro" id="IPR013032">
    <property type="entry name" value="EGF-like_CS"/>
</dbReference>
<dbReference type="InterPro" id="IPR000742">
    <property type="entry name" value="EGF-like_dom"/>
</dbReference>
<dbReference type="InterPro" id="IPR000152">
    <property type="entry name" value="EGF-type_Asp/Asn_hydroxyl_site"/>
</dbReference>
<dbReference type="InterPro" id="IPR018097">
    <property type="entry name" value="EGF_Ca-bd_CS"/>
</dbReference>
<dbReference type="InterPro" id="IPR013111">
    <property type="entry name" value="EGF_extracell"/>
</dbReference>
<dbReference type="InterPro" id="IPR011489">
    <property type="entry name" value="EMI_domain"/>
</dbReference>
<dbReference type="InterPro" id="IPR009030">
    <property type="entry name" value="Growth_fac_rcpt_cys_sf"/>
</dbReference>
<dbReference type="InterPro" id="IPR002049">
    <property type="entry name" value="LE_dom"/>
</dbReference>
<dbReference type="InterPro" id="IPR042635">
    <property type="entry name" value="MEGF10/SREC1/2-like"/>
</dbReference>
<dbReference type="InterPro" id="IPR049883">
    <property type="entry name" value="NOTCH1_EGF-like"/>
</dbReference>
<dbReference type="PANTHER" id="PTHR24043:SF8">
    <property type="entry name" value="EGF-LIKE DOMAIN-CONTAINING PROTEIN"/>
    <property type="match status" value="1"/>
</dbReference>
<dbReference type="PANTHER" id="PTHR24043">
    <property type="entry name" value="SCAVENGER RECEPTOR CLASS F"/>
    <property type="match status" value="1"/>
</dbReference>
<dbReference type="Pfam" id="PF12662">
    <property type="entry name" value="cEGF"/>
    <property type="match status" value="1"/>
</dbReference>
<dbReference type="Pfam" id="PF07974">
    <property type="entry name" value="EGF_2"/>
    <property type="match status" value="2"/>
</dbReference>
<dbReference type="Pfam" id="PF07645">
    <property type="entry name" value="EGF_CA"/>
    <property type="match status" value="3"/>
</dbReference>
<dbReference type="Pfam" id="PF00053">
    <property type="entry name" value="EGF_laminin"/>
    <property type="match status" value="6"/>
</dbReference>
<dbReference type="Pfam" id="PF14670">
    <property type="entry name" value="FXa_inhibition"/>
    <property type="match status" value="2"/>
</dbReference>
<dbReference type="Pfam" id="PF12661">
    <property type="entry name" value="hEGF"/>
    <property type="match status" value="6"/>
</dbReference>
<dbReference type="PRINTS" id="PR00011">
    <property type="entry name" value="EGFLAMININ"/>
</dbReference>
<dbReference type="SMART" id="SM00181">
    <property type="entry name" value="EGF"/>
    <property type="match status" value="32"/>
</dbReference>
<dbReference type="SMART" id="SM00179">
    <property type="entry name" value="EGF_CA"/>
    <property type="match status" value="8"/>
</dbReference>
<dbReference type="SMART" id="SM00180">
    <property type="entry name" value="EGF_Lam"/>
    <property type="match status" value="23"/>
</dbReference>
<dbReference type="SUPFAM" id="SSF57196">
    <property type="entry name" value="EGF/Laminin"/>
    <property type="match status" value="2"/>
</dbReference>
<dbReference type="SUPFAM" id="SSF57184">
    <property type="entry name" value="Growth factor receptor domain"/>
    <property type="match status" value="2"/>
</dbReference>
<dbReference type="PROSITE" id="PS00010">
    <property type="entry name" value="ASX_HYDROXYL"/>
    <property type="match status" value="5"/>
</dbReference>
<dbReference type="PROSITE" id="PS00022">
    <property type="entry name" value="EGF_1"/>
    <property type="match status" value="23"/>
</dbReference>
<dbReference type="PROSITE" id="PS01186">
    <property type="entry name" value="EGF_2"/>
    <property type="match status" value="23"/>
</dbReference>
<dbReference type="PROSITE" id="PS50026">
    <property type="entry name" value="EGF_3"/>
    <property type="match status" value="22"/>
</dbReference>
<dbReference type="PROSITE" id="PS01187">
    <property type="entry name" value="EGF_CA"/>
    <property type="match status" value="5"/>
</dbReference>
<dbReference type="PROSITE" id="PS51041">
    <property type="entry name" value="EMI"/>
    <property type="match status" value="1"/>
</dbReference>
<keyword id="KW-0106">Calcium</keyword>
<keyword id="KW-1015">Disulfide bond</keyword>
<keyword id="KW-0245">EGF-like domain</keyword>
<keyword id="KW-0325">Glycoprotein</keyword>
<keyword id="KW-1185">Reference proteome</keyword>
<keyword id="KW-0677">Repeat</keyword>
<keyword id="KW-0964">Secreted</keyword>
<keyword id="KW-0732">Signal</keyword>
<organism>
    <name type="scientific">Mus musculus</name>
    <name type="common">Mouse</name>
    <dbReference type="NCBI Taxonomy" id="10090"/>
    <lineage>
        <taxon>Eukaryota</taxon>
        <taxon>Metazoa</taxon>
        <taxon>Chordata</taxon>
        <taxon>Craniata</taxon>
        <taxon>Vertebrata</taxon>
        <taxon>Euteleostomi</taxon>
        <taxon>Mammalia</taxon>
        <taxon>Eutheria</taxon>
        <taxon>Euarchontoglires</taxon>
        <taxon>Glires</taxon>
        <taxon>Rodentia</taxon>
        <taxon>Myomorpha</taxon>
        <taxon>Muroidea</taxon>
        <taxon>Muridae</taxon>
        <taxon>Murinae</taxon>
        <taxon>Mus</taxon>
        <taxon>Mus</taxon>
    </lineage>
</organism>
<reference key="1">
    <citation type="journal article" date="2009" name="PLoS Biol.">
        <title>Lineage-specific biology revealed by a finished genome assembly of the mouse.</title>
        <authorList>
            <person name="Church D.M."/>
            <person name="Goodstadt L."/>
            <person name="Hillier L.W."/>
            <person name="Zody M.C."/>
            <person name="Goldstein S."/>
            <person name="She X."/>
            <person name="Bult C.J."/>
            <person name="Agarwala R."/>
            <person name="Cherry J.L."/>
            <person name="DiCuccio M."/>
            <person name="Hlavina W."/>
            <person name="Kapustin Y."/>
            <person name="Meric P."/>
            <person name="Maglott D."/>
            <person name="Birtle Z."/>
            <person name="Marques A.C."/>
            <person name="Graves T."/>
            <person name="Zhou S."/>
            <person name="Teague B."/>
            <person name="Potamousis K."/>
            <person name="Churas C."/>
            <person name="Place M."/>
            <person name="Herschleb J."/>
            <person name="Runnheim R."/>
            <person name="Forrest D."/>
            <person name="Amos-Landgraf J."/>
            <person name="Schwartz D.C."/>
            <person name="Cheng Z."/>
            <person name="Lindblad-Toh K."/>
            <person name="Eichler E.E."/>
            <person name="Ponting C.P."/>
        </authorList>
    </citation>
    <scope>NUCLEOTIDE SEQUENCE [LARGE SCALE GENOMIC DNA]</scope>
    <source>
        <strain>C57BL/6J</strain>
    </source>
</reference>
<reference key="2">
    <citation type="journal article" date="2004" name="Genome Res.">
        <title>The status, quality, and expansion of the NIH full-length cDNA project: the Mammalian Gene Collection (MGC).</title>
        <authorList>
            <consortium name="The MGC Project Team"/>
        </authorList>
    </citation>
    <scope>NUCLEOTIDE SEQUENCE [LARGE SCALE MRNA] OF 917-1572</scope>
    <source>
        <strain>FVB/N-3</strain>
        <tissue>Mammary tumor</tissue>
    </source>
</reference>